<keyword id="KW-0968">Cytoplasmic vesicle</keyword>
<keyword id="KW-1015">Disulfide bond</keyword>
<keyword id="KW-0325">Glycoprotein</keyword>
<keyword id="KW-0391">Immunity</keyword>
<keyword id="KW-0395">Inflammatory response</keyword>
<keyword id="KW-0399">Innate immunity</keyword>
<keyword id="KW-1017">Isopeptide bond</keyword>
<keyword id="KW-0433">Leucine-rich repeat</keyword>
<keyword id="KW-0472">Membrane</keyword>
<keyword id="KW-0520">NAD</keyword>
<keyword id="KW-0675">Receptor</keyword>
<keyword id="KW-0677">Repeat</keyword>
<keyword id="KW-0732">Signal</keyword>
<keyword id="KW-0812">Transmembrane</keyword>
<keyword id="KW-1133">Transmembrane helix</keyword>
<keyword id="KW-0832">Ubl conjugation</keyword>
<sequence>MLHVLWTFWILVAMTDLSRKGCSAQASLSCDAAGVCDGRSRSFTSIPSGLTAAMKSLDLSNNKITSIGHGDLRGCVNLRALILQSSGINTIEEDAFSSLSKLEYLDLSDNHLSNLSSSWFRPLSSLKYLNLLGNPYRILGETPLFLNLTHLQTLRVGNVATFSGIRRTDFAGLTSLDELEIKALSLQNYEPGSLQSIQSIHHLTFHLSQSDFLLGVFEDTLSSVGYLELRDANLDSFYFSELSTDEMNSPMKKLAFQNADLTDESFNELLKLLRYTPELLEVEFDDCTLNGVGDFQPSESDVVRELGKVETLIIRRLHIPRFYSFYDLSTVYTLLEKVKRITVENSKVFLVPCLFSQHLKSLEFLDLSENLMVEEYLKNAACEGSWPSLQTLILRQNRLKSIERTGKILLTLKNLTALDISRNSFQSMPDSCQWPGKMRFLNLSSTGIQAVKMCIPQTLEVLDVSNNNLISFSLFLPLLRELYISRNKLHTLPDASLFPVLLVMKIRENAISTFSKDQLSSFPKLVSLEAGGNHFICSCELLSFTLEHPALVQVLAGWPDSYLCDSPSRLRGQRVQDARPSVLECHQTLLVSGVCCALVLLILLIGGLCHHFHGLWYLRMMWAWLQAKRKPKKAPCRDICYDAFVSYSEQDSYWVENLMVQQLENSEPPFKLCLHKRDFVPGKWIIDNIIDSIEKSHKTLFVLSENFVRSEWCKYELDFSHFRLFDENNDAGILVLLEPIEKKAIPQRFCKLRKIMNTKTYLEWPLDEGQQEVFWVNLRTAIKS</sequence>
<reference key="1">
    <citation type="journal article" date="1999" name="J. Immunol.">
        <title>Cells that carry a null allele for Toll-like receptor 2 are capable of responding to endotoxin.</title>
        <authorList>
            <person name="Heine H."/>
            <person name="Kirschning C.J."/>
            <person name="Lien E."/>
            <person name="Monks B.G."/>
            <person name="Rothe M."/>
            <person name="Golenbock D.T."/>
        </authorList>
    </citation>
    <scope>NUCLEOTIDE SEQUENCE [MRNA]</scope>
    <source>
        <tissue>Ovarian carcinoma</tissue>
    </source>
</reference>
<proteinExistence type="evidence at transcript level"/>
<name>TLR2_CRIGR</name>
<protein>
    <recommendedName>
        <fullName>Toll-like receptor 2</fullName>
    </recommendedName>
    <cdAntigenName>CD282</cdAntigenName>
</protein>
<dbReference type="EMBL" id="AF113614">
    <property type="protein sequence ID" value="AAD46477.1"/>
    <property type="status" value="ALT_FRAME"/>
    <property type="molecule type" value="mRNA"/>
</dbReference>
<dbReference type="SMR" id="Q9R1F8"/>
<dbReference type="GlyCosmos" id="Q9R1F8">
    <property type="glycosylation" value="4 sites, No reported glycans"/>
</dbReference>
<dbReference type="PaxDb" id="10029-XP_007635375.1"/>
<dbReference type="eggNOG" id="KOG4641">
    <property type="taxonomic scope" value="Eukaryota"/>
</dbReference>
<dbReference type="Proteomes" id="UP000694386">
    <property type="component" value="Unplaced"/>
</dbReference>
<dbReference type="Proteomes" id="UP001108280">
    <property type="component" value="Unplaced"/>
</dbReference>
<dbReference type="GO" id="GO:0005794">
    <property type="term" value="C:Golgi apparatus"/>
    <property type="evidence" value="ECO:0000250"/>
    <property type="project" value="UniProtKB"/>
</dbReference>
<dbReference type="GO" id="GO:0045121">
    <property type="term" value="C:membrane raft"/>
    <property type="evidence" value="ECO:0000250"/>
    <property type="project" value="UniProtKB"/>
</dbReference>
<dbReference type="GO" id="GO:0030670">
    <property type="term" value="C:phagocytic vesicle membrane"/>
    <property type="evidence" value="ECO:0007669"/>
    <property type="project" value="UniProtKB-SubCell"/>
</dbReference>
<dbReference type="GO" id="GO:0005886">
    <property type="term" value="C:plasma membrane"/>
    <property type="evidence" value="ECO:0007669"/>
    <property type="project" value="TreeGrafter"/>
</dbReference>
<dbReference type="GO" id="GO:0043235">
    <property type="term" value="C:receptor complex"/>
    <property type="evidence" value="ECO:0007669"/>
    <property type="project" value="TreeGrafter"/>
</dbReference>
<dbReference type="GO" id="GO:0061809">
    <property type="term" value="F:NAD+ nucleosidase activity, cyclic ADP-ribose generating"/>
    <property type="evidence" value="ECO:0007669"/>
    <property type="project" value="UniProtKB-EC"/>
</dbReference>
<dbReference type="GO" id="GO:0004888">
    <property type="term" value="F:transmembrane signaling receptor activity"/>
    <property type="evidence" value="ECO:0007669"/>
    <property type="project" value="InterPro"/>
</dbReference>
<dbReference type="GO" id="GO:0042497">
    <property type="term" value="F:triacyl lipopeptide binding"/>
    <property type="evidence" value="ECO:0007669"/>
    <property type="project" value="TreeGrafter"/>
</dbReference>
<dbReference type="GO" id="GO:0071726">
    <property type="term" value="P:cellular response to diacyl bacterial lipopeptide"/>
    <property type="evidence" value="ECO:0000250"/>
    <property type="project" value="UniProtKB"/>
</dbReference>
<dbReference type="GO" id="GO:0071727">
    <property type="term" value="P:cellular response to triacyl bacterial lipopeptide"/>
    <property type="evidence" value="ECO:0000250"/>
    <property type="project" value="UniProtKB"/>
</dbReference>
<dbReference type="GO" id="GO:0006954">
    <property type="term" value="P:inflammatory response"/>
    <property type="evidence" value="ECO:0007669"/>
    <property type="project" value="UniProtKB-KW"/>
</dbReference>
<dbReference type="GO" id="GO:0045087">
    <property type="term" value="P:innate immune response"/>
    <property type="evidence" value="ECO:0007669"/>
    <property type="project" value="UniProtKB-KW"/>
</dbReference>
<dbReference type="GO" id="GO:0001819">
    <property type="term" value="P:positive regulation of cytokine production"/>
    <property type="evidence" value="ECO:0007669"/>
    <property type="project" value="UniProtKB-ARBA"/>
</dbReference>
<dbReference type="GO" id="GO:0032680">
    <property type="term" value="P:regulation of tumor necrosis factor production"/>
    <property type="evidence" value="ECO:0007669"/>
    <property type="project" value="UniProtKB-ARBA"/>
</dbReference>
<dbReference type="GO" id="GO:0002224">
    <property type="term" value="P:toll-like receptor signaling pathway"/>
    <property type="evidence" value="ECO:0007669"/>
    <property type="project" value="InterPro"/>
</dbReference>
<dbReference type="FunFam" id="3.40.50.10140:FF:000001">
    <property type="entry name" value="Toll-like receptor 2"/>
    <property type="match status" value="1"/>
</dbReference>
<dbReference type="FunFam" id="3.80.10.10:FF:000046">
    <property type="entry name" value="Toll-like receptor 2"/>
    <property type="match status" value="1"/>
</dbReference>
<dbReference type="Gene3D" id="3.80.10.10">
    <property type="entry name" value="Ribonuclease Inhibitor"/>
    <property type="match status" value="1"/>
</dbReference>
<dbReference type="Gene3D" id="3.40.50.10140">
    <property type="entry name" value="Toll/interleukin-1 receptor homology (TIR) domain"/>
    <property type="match status" value="1"/>
</dbReference>
<dbReference type="InterPro" id="IPR000483">
    <property type="entry name" value="Cys-rich_flank_reg_C"/>
</dbReference>
<dbReference type="InterPro" id="IPR001611">
    <property type="entry name" value="Leu-rich_rpt"/>
</dbReference>
<dbReference type="InterPro" id="IPR003591">
    <property type="entry name" value="Leu-rich_rpt_typical-subtyp"/>
</dbReference>
<dbReference type="InterPro" id="IPR032675">
    <property type="entry name" value="LRR_dom_sf"/>
</dbReference>
<dbReference type="InterPro" id="IPR000157">
    <property type="entry name" value="TIR_dom"/>
</dbReference>
<dbReference type="InterPro" id="IPR017241">
    <property type="entry name" value="Toll-like_receptor"/>
</dbReference>
<dbReference type="InterPro" id="IPR035897">
    <property type="entry name" value="Toll_tir_struct_dom_sf"/>
</dbReference>
<dbReference type="PANTHER" id="PTHR24365">
    <property type="entry name" value="TOLL-LIKE RECEPTOR"/>
    <property type="match status" value="1"/>
</dbReference>
<dbReference type="PANTHER" id="PTHR24365:SF17">
    <property type="entry name" value="TOLL-LIKE RECEPTOR 2"/>
    <property type="match status" value="1"/>
</dbReference>
<dbReference type="Pfam" id="PF00560">
    <property type="entry name" value="LRR_1"/>
    <property type="match status" value="1"/>
</dbReference>
<dbReference type="Pfam" id="PF13855">
    <property type="entry name" value="LRR_8"/>
    <property type="match status" value="3"/>
</dbReference>
<dbReference type="Pfam" id="PF01463">
    <property type="entry name" value="LRRCT"/>
    <property type="match status" value="1"/>
</dbReference>
<dbReference type="Pfam" id="PF01582">
    <property type="entry name" value="TIR"/>
    <property type="match status" value="1"/>
</dbReference>
<dbReference type="PIRSF" id="PIRSF037595">
    <property type="entry name" value="Toll-like_receptor"/>
    <property type="match status" value="1"/>
</dbReference>
<dbReference type="PRINTS" id="PR00019">
    <property type="entry name" value="LEURICHRPT"/>
</dbReference>
<dbReference type="SMART" id="SM00364">
    <property type="entry name" value="LRR_BAC"/>
    <property type="match status" value="4"/>
</dbReference>
<dbReference type="SMART" id="SM00369">
    <property type="entry name" value="LRR_TYP"/>
    <property type="match status" value="6"/>
</dbReference>
<dbReference type="SMART" id="SM00082">
    <property type="entry name" value="LRRCT"/>
    <property type="match status" value="1"/>
</dbReference>
<dbReference type="SMART" id="SM00255">
    <property type="entry name" value="TIR"/>
    <property type="match status" value="1"/>
</dbReference>
<dbReference type="SUPFAM" id="SSF52058">
    <property type="entry name" value="L domain-like"/>
    <property type="match status" value="2"/>
</dbReference>
<dbReference type="SUPFAM" id="SSF52200">
    <property type="entry name" value="Toll/Interleukin receptor TIR domain"/>
    <property type="match status" value="1"/>
</dbReference>
<dbReference type="PROSITE" id="PS51450">
    <property type="entry name" value="LRR"/>
    <property type="match status" value="9"/>
</dbReference>
<dbReference type="PROSITE" id="PS50104">
    <property type="entry name" value="TIR"/>
    <property type="match status" value="1"/>
</dbReference>
<evidence type="ECO:0000250" key="1"/>
<evidence type="ECO:0000250" key="2">
    <source>
        <dbReference type="UniProtKB" id="O00206"/>
    </source>
</evidence>
<evidence type="ECO:0000250" key="3">
    <source>
        <dbReference type="UniProtKB" id="O60603"/>
    </source>
</evidence>
<evidence type="ECO:0000250" key="4">
    <source>
        <dbReference type="UniProtKB" id="Q9QUN7"/>
    </source>
</evidence>
<evidence type="ECO:0000255" key="5"/>
<evidence type="ECO:0000255" key="6">
    <source>
        <dbReference type="PROSITE-ProRule" id="PRU00204"/>
    </source>
</evidence>
<evidence type="ECO:0000305" key="7"/>
<gene>
    <name type="primary">TLR2</name>
</gene>
<feature type="signal peptide" evidence="5">
    <location>
        <begin position="1"/>
        <end position="24"/>
    </location>
</feature>
<feature type="chain" id="PRO_0000034709" description="Toll-like receptor 2">
    <location>
        <begin position="25"/>
        <end position="784"/>
    </location>
</feature>
<feature type="topological domain" description="Extracellular" evidence="5">
    <location>
        <begin position="25"/>
        <end position="588"/>
    </location>
</feature>
<feature type="transmembrane region" description="Helical" evidence="5">
    <location>
        <begin position="589"/>
        <end position="609"/>
    </location>
</feature>
<feature type="topological domain" description="Cytoplasmic" evidence="5">
    <location>
        <begin position="610"/>
        <end position="784"/>
    </location>
</feature>
<feature type="repeat" description="LRR 1">
    <location>
        <begin position="54"/>
        <end position="77"/>
    </location>
</feature>
<feature type="repeat" description="LRR 2">
    <location>
        <begin position="78"/>
        <end position="101"/>
    </location>
</feature>
<feature type="repeat" description="LRR 3">
    <location>
        <begin position="102"/>
        <end position="125"/>
    </location>
</feature>
<feature type="repeat" description="LRR 4">
    <location>
        <begin position="126"/>
        <end position="150"/>
    </location>
</feature>
<feature type="repeat" description="LRR 5">
    <location>
        <begin position="151"/>
        <end position="175"/>
    </location>
</feature>
<feature type="repeat" description="LRR 6">
    <location>
        <begin position="176"/>
        <end position="199"/>
    </location>
</feature>
<feature type="repeat" description="LRR 7">
    <location>
        <begin position="200"/>
        <end position="223"/>
    </location>
</feature>
<feature type="repeat" description="LRR 8">
    <location>
        <begin position="224"/>
        <end position="250"/>
    </location>
</feature>
<feature type="repeat" description="LRR 9">
    <location>
        <begin position="251"/>
        <end position="278"/>
    </location>
</feature>
<feature type="repeat" description="LRR 10">
    <location>
        <begin position="279"/>
        <end position="308"/>
    </location>
</feature>
<feature type="repeat" description="LRR 11">
    <location>
        <begin position="309"/>
        <end position="337"/>
    </location>
</feature>
<feature type="repeat" description="LRR 12">
    <location>
        <begin position="338"/>
        <end position="361"/>
    </location>
</feature>
<feature type="repeat" description="LRR 13">
    <location>
        <begin position="362"/>
        <end position="388"/>
    </location>
</feature>
<feature type="repeat" description="LRR 14">
    <location>
        <begin position="389"/>
        <end position="414"/>
    </location>
</feature>
<feature type="repeat" description="LRR 15">
    <location>
        <begin position="415"/>
        <end position="437"/>
    </location>
</feature>
<feature type="repeat" description="LRR 16">
    <location>
        <begin position="438"/>
        <end position="457"/>
    </location>
</feature>
<feature type="repeat" description="LRR 17">
    <location>
        <begin position="458"/>
        <end position="478"/>
    </location>
</feature>
<feature type="repeat" description="LRR 18">
    <location>
        <begin position="479"/>
        <end position="500"/>
    </location>
</feature>
<feature type="repeat" description="LRR 19">
    <location>
        <begin position="501"/>
        <end position="524"/>
    </location>
</feature>
<feature type="domain" description="LRRCT">
    <location>
        <begin position="525"/>
        <end position="579"/>
    </location>
</feature>
<feature type="domain" description="TIR" evidence="6">
    <location>
        <begin position="639"/>
        <end position="782"/>
    </location>
</feature>
<feature type="short sequence motif" description="ATG16L1-binding motif">
    <location>
        <begin position="761"/>
        <end position="778"/>
    </location>
</feature>
<feature type="site" description="Interaction with bacterial lipopeptide" evidence="1">
    <location>
        <position position="349"/>
    </location>
</feature>
<feature type="glycosylation site" description="N-linked (GlcNAc...) asparagine" evidence="5">
    <location>
        <position position="114"/>
    </location>
</feature>
<feature type="glycosylation site" description="N-linked (GlcNAc...) asparagine" evidence="5">
    <location>
        <position position="147"/>
    </location>
</feature>
<feature type="glycosylation site" description="N-linked (GlcNAc...) asparagine" evidence="5">
    <location>
        <position position="414"/>
    </location>
</feature>
<feature type="glycosylation site" description="N-linked (GlcNAc...) asparagine" evidence="5">
    <location>
        <position position="442"/>
    </location>
</feature>
<feature type="disulfide bond" evidence="1">
    <location>
        <begin position="30"/>
        <end position="36"/>
    </location>
</feature>
<feature type="disulfide bond" evidence="1">
    <location>
        <begin position="353"/>
        <end position="382"/>
    </location>
</feature>
<feature type="disulfide bond" evidence="1">
    <location>
        <begin position="432"/>
        <end position="454"/>
    </location>
</feature>
<feature type="cross-link" description="Glycyl lysine isopeptide (Lys-Gly) (interchain with G-Cter in ubiquitin)" evidence="3">
    <location>
        <position position="754"/>
    </location>
</feature>
<accession>Q9R1F8</accession>
<organism>
    <name type="scientific">Cricetulus griseus</name>
    <name type="common">Chinese hamster</name>
    <name type="synonym">Cricetulus barabensis griseus</name>
    <dbReference type="NCBI Taxonomy" id="10029"/>
    <lineage>
        <taxon>Eukaryota</taxon>
        <taxon>Metazoa</taxon>
        <taxon>Chordata</taxon>
        <taxon>Craniata</taxon>
        <taxon>Vertebrata</taxon>
        <taxon>Euteleostomi</taxon>
        <taxon>Mammalia</taxon>
        <taxon>Eutheria</taxon>
        <taxon>Euarchontoglires</taxon>
        <taxon>Glires</taxon>
        <taxon>Rodentia</taxon>
        <taxon>Myomorpha</taxon>
        <taxon>Muroidea</taxon>
        <taxon>Cricetidae</taxon>
        <taxon>Cricetinae</taxon>
        <taxon>Cricetulus</taxon>
    </lineage>
</organism>
<comment type="function">
    <text evidence="3 4">Cooperates with LY96 to mediate the innate immune response to bacterial lipoproteins and other microbial cell wall components. Cooperates with TLR1 or TLR6 to mediate the innate immune response to bacterial lipoproteins or lipopeptides. Acts via MYD88 and TRAF6, leading to NF-kappa-B activation, cytokine secretion and the inflammatory response (By similarity). May also promote apoptosis in response to lipoproteins. Forms activation clusters composed of several receptors depending on the ligand, these clusters trigger signaling from the cell surface and subsequently are targeted to the Golgi in a lipid-raft dependent pathway. Forms the cluster TLR2:TLR6:CD14:CD36 in response to diacylated lipopeptides and TLR2:TLR1:CD14 in response to triacylated lipopeptides (By similarity).</text>
</comment>
<comment type="subunit">
    <text evidence="3 4">Interacts with LY96, TLR1 and TLR6 (via extracellular domain). TLR2 seems to exist in heterodimers with either TLR1 or TLR6 before stimulation by the ligand. The heterodimers form bigger oligomers in response to their corresponding ligands as well as further heterotypic associations with other receptors such as CD14 and/or CD36. Binds MYD88 (via TIR domain). Interacts with TICAM1. Interacts with CNPY3. Interacts with ATG16L1. Interacts with PPP1R11. Interacts with TICAM2. Interacts with TIRAP (By similarity).</text>
</comment>
<comment type="subcellular location">
    <subcellularLocation>
        <location evidence="4">Membrane</location>
        <topology evidence="5">Single-pass type I membrane protein</topology>
    </subcellularLocation>
    <subcellularLocation>
        <location evidence="4">Cytoplasmic vesicle</location>
        <location evidence="4">Phagosome membrane</location>
        <topology evidence="5">Single-pass type I membrane protein</topology>
    </subcellularLocation>
    <subcellularLocation>
        <location evidence="3">Membrane raft</location>
    </subcellularLocation>
    <text evidence="3">Does not reside in lipid rafts before stimulation but accumulates increasingly in the raft upon the presence of the microbial ligand. In response to diacylated lipoproteins, TLR2:TLR6 heterodimers are recruited in lipid rafts, this recruitment determine the intracellular targeting to the Golgi apparatus. Triacylated lipoproteins induce the same mechanism for TLR2:TLR1 heterodimers.</text>
</comment>
<comment type="domain">
    <text evidence="1">Ester-bound lipid substrates are bound through a crevice formed between the LRR 11 and LRR 12.</text>
</comment>
<comment type="domain">
    <text evidence="1">The ATG16L1-binding motif mediates interaction with ATG16L1.</text>
</comment>
<comment type="PTM">
    <text evidence="4">Ubiquitinated at Lys-754 by PPP1R11, leading to its degradation. Deubiquitinated by USP2.</text>
</comment>
<comment type="PTM">
    <text evidence="3">Glycosylation of Asn-442 is critical for secretion of the N-terminal ectodomain of TLR2.</text>
</comment>
<comment type="similarity">
    <text evidence="7">Belongs to the Toll-like receptor family.</text>
</comment>
<comment type="caution">
    <text evidence="2 7">In some plant proteins and in human SARM1, the TIR domain has NAD(+) hydrolase (NADase) activity (By similarity). However, despite the presence of the catalytic Asp residue, the isolated TIR domain of human TLR4 lacks NADase activity (By similarity). Based on this, it is unlikely that Toll-like receptors have NADase activity.</text>
</comment>
<comment type="sequence caution" evidence="7">
    <conflict type="frameshift">
        <sequence resource="EMBL-CDS" id="AAD46477"/>
    </conflict>
    <text>A natural deletion may however lead to truncated protein which lacks transmembrane or intracellular domain.</text>
</comment>